<name>TATB_HELPH</name>
<sequence length="160" mass="18397">MFGMGFFEILVVLVVAIIFLGPEKFPQAVVDVVKFFRAVKKTLNDAKDTLDKEINIEEIKKETLEYQKLFENKVESLKGVKIEELEDAKITAENEIKSIQDLMQDYQRSLETNTIPNHLNEEVSNEEALNKEVSSDESPKEVQLATDNNTKEHDKEKEHV</sequence>
<dbReference type="EMBL" id="CP000241">
    <property type="protein sequence ID" value="ABF84454.1"/>
    <property type="molecule type" value="Genomic_DNA"/>
</dbReference>
<dbReference type="RefSeq" id="WP_000467611.1">
    <property type="nucleotide sequence ID" value="NC_008086.1"/>
</dbReference>
<dbReference type="SMR" id="Q1CUB8"/>
<dbReference type="KEGG" id="hpa:HPAG1_0387"/>
<dbReference type="HOGENOM" id="CLU_086034_0_2_7"/>
<dbReference type="GO" id="GO:0033281">
    <property type="term" value="C:TAT protein transport complex"/>
    <property type="evidence" value="ECO:0007669"/>
    <property type="project" value="UniProtKB-UniRule"/>
</dbReference>
<dbReference type="GO" id="GO:0008320">
    <property type="term" value="F:protein transmembrane transporter activity"/>
    <property type="evidence" value="ECO:0007669"/>
    <property type="project" value="UniProtKB-UniRule"/>
</dbReference>
<dbReference type="GO" id="GO:0043953">
    <property type="term" value="P:protein transport by the Tat complex"/>
    <property type="evidence" value="ECO:0007669"/>
    <property type="project" value="UniProtKB-UniRule"/>
</dbReference>
<dbReference type="Gene3D" id="1.20.5.3310">
    <property type="match status" value="1"/>
</dbReference>
<dbReference type="HAMAP" id="MF_00237">
    <property type="entry name" value="TatB"/>
    <property type="match status" value="1"/>
</dbReference>
<dbReference type="InterPro" id="IPR018448">
    <property type="entry name" value="TatB"/>
</dbReference>
<dbReference type="NCBIfam" id="TIGR01410">
    <property type="entry name" value="tatB"/>
    <property type="match status" value="1"/>
</dbReference>
<dbReference type="PANTHER" id="PTHR33162">
    <property type="entry name" value="SEC-INDEPENDENT PROTEIN TRANSLOCASE PROTEIN TATA, CHLOROPLASTIC"/>
    <property type="match status" value="1"/>
</dbReference>
<dbReference type="PANTHER" id="PTHR33162:SF1">
    <property type="entry name" value="SEC-INDEPENDENT PROTEIN TRANSLOCASE PROTEIN TATA, CHLOROPLASTIC"/>
    <property type="match status" value="1"/>
</dbReference>
<dbReference type="PRINTS" id="PR01506">
    <property type="entry name" value="TATBPROTEIN"/>
</dbReference>
<protein>
    <recommendedName>
        <fullName evidence="1">Sec-independent protein translocase protein TatB</fullName>
    </recommendedName>
</protein>
<feature type="chain" id="PRO_0000301177" description="Sec-independent protein translocase protein TatB">
    <location>
        <begin position="1"/>
        <end position="160"/>
    </location>
</feature>
<feature type="transmembrane region" description="Helical" evidence="1">
    <location>
        <begin position="1"/>
        <end position="21"/>
    </location>
</feature>
<feature type="region of interest" description="Disordered" evidence="2">
    <location>
        <begin position="118"/>
        <end position="160"/>
    </location>
</feature>
<feature type="compositionally biased region" description="Basic and acidic residues" evidence="2">
    <location>
        <begin position="128"/>
        <end position="140"/>
    </location>
</feature>
<feature type="compositionally biased region" description="Basic and acidic residues" evidence="2">
    <location>
        <begin position="149"/>
        <end position="160"/>
    </location>
</feature>
<reference key="1">
    <citation type="journal article" date="2006" name="Proc. Natl. Acad. Sci. U.S.A.">
        <title>The complete genome sequence of a chronic atrophic gastritis Helicobacter pylori strain: evolution during disease progression.</title>
        <authorList>
            <person name="Oh J.D."/>
            <person name="Kling-Baeckhed H."/>
            <person name="Giannakis M."/>
            <person name="Xu J."/>
            <person name="Fulton R.S."/>
            <person name="Fulton L.A."/>
            <person name="Cordum H.S."/>
            <person name="Wang C."/>
            <person name="Elliott G."/>
            <person name="Edwards J."/>
            <person name="Mardis E.R."/>
            <person name="Engstrand L.G."/>
            <person name="Gordon J.I."/>
        </authorList>
    </citation>
    <scope>NUCLEOTIDE SEQUENCE [LARGE SCALE GENOMIC DNA]</scope>
    <source>
        <strain>HPAG1</strain>
    </source>
</reference>
<proteinExistence type="inferred from homology"/>
<evidence type="ECO:0000255" key="1">
    <source>
        <dbReference type="HAMAP-Rule" id="MF_00237"/>
    </source>
</evidence>
<evidence type="ECO:0000256" key="2">
    <source>
        <dbReference type="SAM" id="MobiDB-lite"/>
    </source>
</evidence>
<organism>
    <name type="scientific">Helicobacter pylori (strain HPAG1)</name>
    <dbReference type="NCBI Taxonomy" id="357544"/>
    <lineage>
        <taxon>Bacteria</taxon>
        <taxon>Pseudomonadati</taxon>
        <taxon>Campylobacterota</taxon>
        <taxon>Epsilonproteobacteria</taxon>
        <taxon>Campylobacterales</taxon>
        <taxon>Helicobacteraceae</taxon>
        <taxon>Helicobacter</taxon>
    </lineage>
</organism>
<accession>Q1CUB8</accession>
<comment type="function">
    <text evidence="1">Part of the twin-arginine translocation (Tat) system that transports large folded proteins containing a characteristic twin-arginine motif in their signal peptide across membranes. Together with TatC, TatB is part of a receptor directly interacting with Tat signal peptides. TatB may form an oligomeric binding site that transiently accommodates folded Tat precursor proteins before their translocation.</text>
</comment>
<comment type="subunit">
    <text evidence="1">The Tat system comprises two distinct complexes: a TatABC complex, containing multiple copies of TatA, TatB and TatC subunits, and a separate TatA complex, containing only TatA subunits. Substrates initially bind to the TatABC complex, which probably triggers association of the separate TatA complex to form the active translocon.</text>
</comment>
<comment type="subcellular location">
    <subcellularLocation>
        <location evidence="1">Cell inner membrane</location>
        <topology evidence="1">Single-pass membrane protein</topology>
    </subcellularLocation>
</comment>
<comment type="similarity">
    <text evidence="1">Belongs to the TatB family.</text>
</comment>
<gene>
    <name evidence="1" type="primary">tatB</name>
    <name type="ordered locus">HPAG1_0387</name>
</gene>
<keyword id="KW-0997">Cell inner membrane</keyword>
<keyword id="KW-1003">Cell membrane</keyword>
<keyword id="KW-0472">Membrane</keyword>
<keyword id="KW-0653">Protein transport</keyword>
<keyword id="KW-0811">Translocation</keyword>
<keyword id="KW-0812">Transmembrane</keyword>
<keyword id="KW-1133">Transmembrane helix</keyword>
<keyword id="KW-0813">Transport</keyword>